<evidence type="ECO:0000255" key="1">
    <source>
        <dbReference type="HAMAP-Rule" id="MF_00182"/>
    </source>
</evidence>
<reference key="1">
    <citation type="journal article" date="2007" name="PLoS ONE">
        <title>Complete genomic characterization of a pathogenic A.II strain of Francisella tularensis subspecies tularensis.</title>
        <authorList>
            <person name="Beckstrom-Sternberg S.M."/>
            <person name="Auerbach R.K."/>
            <person name="Godbole S."/>
            <person name="Pearson J.V."/>
            <person name="Beckstrom-Sternberg J.S."/>
            <person name="Deng Z."/>
            <person name="Munk C."/>
            <person name="Kubota K."/>
            <person name="Zhou Y."/>
            <person name="Bruce D."/>
            <person name="Noronha J."/>
            <person name="Scheuermann R.H."/>
            <person name="Wang A."/>
            <person name="Wei X."/>
            <person name="Wang J."/>
            <person name="Hao J."/>
            <person name="Wagner D.M."/>
            <person name="Brettin T.S."/>
            <person name="Brown N."/>
            <person name="Gilna P."/>
            <person name="Keim P.S."/>
        </authorList>
    </citation>
    <scope>NUCLEOTIDE SEQUENCE [LARGE SCALE GENOMIC DNA]</scope>
    <source>
        <strain>WY96-3418</strain>
    </source>
</reference>
<proteinExistence type="inferred from homology"/>
<name>FMT_FRATW</name>
<keyword id="KW-0648">Protein biosynthesis</keyword>
<keyword id="KW-0808">Transferase</keyword>
<accession>A4IXN6</accession>
<dbReference type="EC" id="2.1.2.9" evidence="1"/>
<dbReference type="EMBL" id="CP000608">
    <property type="protein sequence ID" value="ABO46688.1"/>
    <property type="molecule type" value="Genomic_DNA"/>
</dbReference>
<dbReference type="RefSeq" id="WP_003019095.1">
    <property type="nucleotide sequence ID" value="NC_009257.1"/>
</dbReference>
<dbReference type="SMR" id="A4IXN6"/>
<dbReference type="KEGG" id="ftw:FTW_0818"/>
<dbReference type="HOGENOM" id="CLU_033347_1_2_6"/>
<dbReference type="GO" id="GO:0005829">
    <property type="term" value="C:cytosol"/>
    <property type="evidence" value="ECO:0007669"/>
    <property type="project" value="TreeGrafter"/>
</dbReference>
<dbReference type="GO" id="GO:0004479">
    <property type="term" value="F:methionyl-tRNA formyltransferase activity"/>
    <property type="evidence" value="ECO:0007669"/>
    <property type="project" value="UniProtKB-UniRule"/>
</dbReference>
<dbReference type="CDD" id="cd08646">
    <property type="entry name" value="FMT_core_Met-tRNA-FMT_N"/>
    <property type="match status" value="1"/>
</dbReference>
<dbReference type="CDD" id="cd08704">
    <property type="entry name" value="Met_tRNA_FMT_C"/>
    <property type="match status" value="1"/>
</dbReference>
<dbReference type="Gene3D" id="3.40.50.12230">
    <property type="match status" value="1"/>
</dbReference>
<dbReference type="HAMAP" id="MF_00182">
    <property type="entry name" value="Formyl_trans"/>
    <property type="match status" value="1"/>
</dbReference>
<dbReference type="InterPro" id="IPR005794">
    <property type="entry name" value="Fmt"/>
</dbReference>
<dbReference type="InterPro" id="IPR005793">
    <property type="entry name" value="Formyl_trans_C"/>
</dbReference>
<dbReference type="InterPro" id="IPR002376">
    <property type="entry name" value="Formyl_transf_N"/>
</dbReference>
<dbReference type="InterPro" id="IPR036477">
    <property type="entry name" value="Formyl_transf_N_sf"/>
</dbReference>
<dbReference type="InterPro" id="IPR011034">
    <property type="entry name" value="Formyl_transferase-like_C_sf"/>
</dbReference>
<dbReference type="InterPro" id="IPR001555">
    <property type="entry name" value="GART_AS"/>
</dbReference>
<dbReference type="InterPro" id="IPR044135">
    <property type="entry name" value="Met-tRNA-FMT_C"/>
</dbReference>
<dbReference type="InterPro" id="IPR041711">
    <property type="entry name" value="Met-tRNA-FMT_N"/>
</dbReference>
<dbReference type="NCBIfam" id="TIGR00460">
    <property type="entry name" value="fmt"/>
    <property type="match status" value="1"/>
</dbReference>
<dbReference type="PANTHER" id="PTHR11138">
    <property type="entry name" value="METHIONYL-TRNA FORMYLTRANSFERASE"/>
    <property type="match status" value="1"/>
</dbReference>
<dbReference type="PANTHER" id="PTHR11138:SF5">
    <property type="entry name" value="METHIONYL-TRNA FORMYLTRANSFERASE, MITOCHONDRIAL"/>
    <property type="match status" value="1"/>
</dbReference>
<dbReference type="Pfam" id="PF02911">
    <property type="entry name" value="Formyl_trans_C"/>
    <property type="match status" value="1"/>
</dbReference>
<dbReference type="Pfam" id="PF00551">
    <property type="entry name" value="Formyl_trans_N"/>
    <property type="match status" value="1"/>
</dbReference>
<dbReference type="SUPFAM" id="SSF50486">
    <property type="entry name" value="FMT C-terminal domain-like"/>
    <property type="match status" value="1"/>
</dbReference>
<dbReference type="SUPFAM" id="SSF53328">
    <property type="entry name" value="Formyltransferase"/>
    <property type="match status" value="1"/>
</dbReference>
<dbReference type="PROSITE" id="PS00373">
    <property type="entry name" value="GART"/>
    <property type="match status" value="1"/>
</dbReference>
<sequence>MKKLNIIFAGTPDISAQVLKDLYKSQHNIQAVLTQPDRAKGRGKKVQFSPVKEVALANHTPVFQPLSFKKNPEVLEQIKQLKPDVIVVIAYGIIVPQEFLDIPRYGCLNIHVSLLPKWRGAAPIQRAIQAGDTKTGVCIMQMDAGLDTGDILNTLEIEIQETDTSQTLHDKFAKLSIKPLLETLEKIEIIKPEPQQGEPTYAHKITKQEGLIDFTKSAWQISCHIRAFTPWPGAYFILDDEAIKVGEFEILYQNTDNRKAGTIIDIYRSGFDIATSDKIIRFRQLQFPNKKMLNIVDILNGKDLDKYIGYKLG</sequence>
<comment type="function">
    <text evidence="1">Attaches a formyl group to the free amino group of methionyl-tRNA(fMet). The formyl group appears to play a dual role in the initiator identity of N-formylmethionyl-tRNA by promoting its recognition by IF2 and preventing the misappropriation of this tRNA by the elongation apparatus.</text>
</comment>
<comment type="catalytic activity">
    <reaction evidence="1">
        <text>L-methionyl-tRNA(fMet) + (6R)-10-formyltetrahydrofolate = N-formyl-L-methionyl-tRNA(fMet) + (6S)-5,6,7,8-tetrahydrofolate + H(+)</text>
        <dbReference type="Rhea" id="RHEA:24380"/>
        <dbReference type="Rhea" id="RHEA-COMP:9952"/>
        <dbReference type="Rhea" id="RHEA-COMP:9953"/>
        <dbReference type="ChEBI" id="CHEBI:15378"/>
        <dbReference type="ChEBI" id="CHEBI:57453"/>
        <dbReference type="ChEBI" id="CHEBI:78530"/>
        <dbReference type="ChEBI" id="CHEBI:78844"/>
        <dbReference type="ChEBI" id="CHEBI:195366"/>
        <dbReference type="EC" id="2.1.2.9"/>
    </reaction>
</comment>
<comment type="similarity">
    <text evidence="1">Belongs to the Fmt family.</text>
</comment>
<gene>
    <name evidence="1" type="primary">fmt</name>
    <name type="ordered locus">FTW_0818</name>
</gene>
<organism>
    <name type="scientific">Francisella tularensis subsp. tularensis (strain WY96-3418)</name>
    <dbReference type="NCBI Taxonomy" id="418136"/>
    <lineage>
        <taxon>Bacteria</taxon>
        <taxon>Pseudomonadati</taxon>
        <taxon>Pseudomonadota</taxon>
        <taxon>Gammaproteobacteria</taxon>
        <taxon>Thiotrichales</taxon>
        <taxon>Francisellaceae</taxon>
        <taxon>Francisella</taxon>
    </lineage>
</organism>
<feature type="chain" id="PRO_1000020068" description="Methionyl-tRNA formyltransferase">
    <location>
        <begin position="1"/>
        <end position="313"/>
    </location>
</feature>
<feature type="binding site" evidence="1">
    <location>
        <begin position="113"/>
        <end position="116"/>
    </location>
    <ligand>
        <name>(6S)-5,6,7,8-tetrahydrofolate</name>
        <dbReference type="ChEBI" id="CHEBI:57453"/>
    </ligand>
</feature>
<protein>
    <recommendedName>
        <fullName evidence="1">Methionyl-tRNA formyltransferase</fullName>
        <ecNumber evidence="1">2.1.2.9</ecNumber>
    </recommendedName>
</protein>